<proteinExistence type="inferred from homology"/>
<protein>
    <recommendedName>
        <fullName evidence="1">Phosphopentomutase</fullName>
        <ecNumber evidence="1">5.4.2.7</ecNumber>
    </recommendedName>
    <alternativeName>
        <fullName evidence="1">Phosphodeoxyribomutase</fullName>
    </alternativeName>
</protein>
<reference key="1">
    <citation type="submission" date="2007-05" db="EMBL/GenBank/DDBJ databases">
        <title>Complete sequence of Thermotoga petrophila RKU-1.</title>
        <authorList>
            <consortium name="US DOE Joint Genome Institute"/>
            <person name="Copeland A."/>
            <person name="Lucas S."/>
            <person name="Lapidus A."/>
            <person name="Barry K."/>
            <person name="Glavina del Rio T."/>
            <person name="Dalin E."/>
            <person name="Tice H."/>
            <person name="Pitluck S."/>
            <person name="Sims D."/>
            <person name="Brettin T."/>
            <person name="Bruce D."/>
            <person name="Detter J.C."/>
            <person name="Han C."/>
            <person name="Tapia R."/>
            <person name="Schmutz J."/>
            <person name="Larimer F."/>
            <person name="Land M."/>
            <person name="Hauser L."/>
            <person name="Kyrpides N."/>
            <person name="Mikhailova N."/>
            <person name="Nelson K."/>
            <person name="Gogarten J.P."/>
            <person name="Noll K."/>
            <person name="Richardson P."/>
        </authorList>
    </citation>
    <scope>NUCLEOTIDE SEQUENCE [LARGE SCALE GENOMIC DNA]</scope>
    <source>
        <strain>ATCC BAA-488 / DSM 13995 / JCM 10881 / RKU-1</strain>
    </source>
</reference>
<accession>A5IKQ4</accession>
<dbReference type="EC" id="5.4.2.7" evidence="1"/>
<dbReference type="EMBL" id="CP000702">
    <property type="protein sequence ID" value="ABQ46777.1"/>
    <property type="molecule type" value="Genomic_DNA"/>
</dbReference>
<dbReference type="RefSeq" id="WP_011943353.1">
    <property type="nucleotide sequence ID" value="NC_009486.1"/>
</dbReference>
<dbReference type="SMR" id="A5IKQ4"/>
<dbReference type="STRING" id="390874.Tpet_0758"/>
<dbReference type="KEGG" id="tpt:Tpet_0758"/>
<dbReference type="eggNOG" id="COG1015">
    <property type="taxonomic scope" value="Bacteria"/>
</dbReference>
<dbReference type="HOGENOM" id="CLU_053861_0_0_0"/>
<dbReference type="UniPathway" id="UPA00002">
    <property type="reaction ID" value="UER00467"/>
</dbReference>
<dbReference type="Proteomes" id="UP000006558">
    <property type="component" value="Chromosome"/>
</dbReference>
<dbReference type="GO" id="GO:0005829">
    <property type="term" value="C:cytosol"/>
    <property type="evidence" value="ECO:0007669"/>
    <property type="project" value="TreeGrafter"/>
</dbReference>
<dbReference type="GO" id="GO:0000287">
    <property type="term" value="F:magnesium ion binding"/>
    <property type="evidence" value="ECO:0007669"/>
    <property type="project" value="InterPro"/>
</dbReference>
<dbReference type="GO" id="GO:0030145">
    <property type="term" value="F:manganese ion binding"/>
    <property type="evidence" value="ECO:0007669"/>
    <property type="project" value="UniProtKB-UniRule"/>
</dbReference>
<dbReference type="GO" id="GO:0008973">
    <property type="term" value="F:phosphopentomutase activity"/>
    <property type="evidence" value="ECO:0007669"/>
    <property type="project" value="UniProtKB-UniRule"/>
</dbReference>
<dbReference type="GO" id="GO:0006018">
    <property type="term" value="P:2-deoxyribose 1-phosphate catabolic process"/>
    <property type="evidence" value="ECO:0007669"/>
    <property type="project" value="UniProtKB-UniRule"/>
</dbReference>
<dbReference type="GO" id="GO:0006015">
    <property type="term" value="P:5-phosphoribose 1-diphosphate biosynthetic process"/>
    <property type="evidence" value="ECO:0007669"/>
    <property type="project" value="UniProtKB-UniPathway"/>
</dbReference>
<dbReference type="GO" id="GO:0043094">
    <property type="term" value="P:metabolic compound salvage"/>
    <property type="evidence" value="ECO:0007669"/>
    <property type="project" value="InterPro"/>
</dbReference>
<dbReference type="GO" id="GO:0009117">
    <property type="term" value="P:nucleotide metabolic process"/>
    <property type="evidence" value="ECO:0007669"/>
    <property type="project" value="InterPro"/>
</dbReference>
<dbReference type="CDD" id="cd16009">
    <property type="entry name" value="PPM"/>
    <property type="match status" value="1"/>
</dbReference>
<dbReference type="FunFam" id="3.30.70.1250:FF:000001">
    <property type="entry name" value="Phosphopentomutase"/>
    <property type="match status" value="1"/>
</dbReference>
<dbReference type="Gene3D" id="3.40.720.10">
    <property type="entry name" value="Alkaline Phosphatase, subunit A"/>
    <property type="match status" value="1"/>
</dbReference>
<dbReference type="Gene3D" id="3.30.70.1250">
    <property type="entry name" value="Phosphopentomutase"/>
    <property type="match status" value="1"/>
</dbReference>
<dbReference type="HAMAP" id="MF_00740">
    <property type="entry name" value="Phosphopentomut"/>
    <property type="match status" value="1"/>
</dbReference>
<dbReference type="InterPro" id="IPR017850">
    <property type="entry name" value="Alkaline_phosphatase_core_sf"/>
</dbReference>
<dbReference type="InterPro" id="IPR010045">
    <property type="entry name" value="DeoB"/>
</dbReference>
<dbReference type="InterPro" id="IPR006124">
    <property type="entry name" value="Metalloenzyme"/>
</dbReference>
<dbReference type="InterPro" id="IPR024052">
    <property type="entry name" value="Phosphopentomutase_DeoB_cap_sf"/>
</dbReference>
<dbReference type="NCBIfam" id="TIGR01696">
    <property type="entry name" value="deoB"/>
    <property type="match status" value="1"/>
</dbReference>
<dbReference type="NCBIfam" id="NF003766">
    <property type="entry name" value="PRK05362.1"/>
    <property type="match status" value="1"/>
</dbReference>
<dbReference type="PANTHER" id="PTHR21110">
    <property type="entry name" value="PHOSPHOPENTOMUTASE"/>
    <property type="match status" value="1"/>
</dbReference>
<dbReference type="PANTHER" id="PTHR21110:SF0">
    <property type="entry name" value="PHOSPHOPENTOMUTASE"/>
    <property type="match status" value="1"/>
</dbReference>
<dbReference type="Pfam" id="PF01676">
    <property type="entry name" value="Metalloenzyme"/>
    <property type="match status" value="1"/>
</dbReference>
<dbReference type="PIRSF" id="PIRSF001491">
    <property type="entry name" value="Ppentomutase"/>
    <property type="match status" value="1"/>
</dbReference>
<dbReference type="SUPFAM" id="SSF53649">
    <property type="entry name" value="Alkaline phosphatase-like"/>
    <property type="match status" value="1"/>
</dbReference>
<dbReference type="SUPFAM" id="SSF143856">
    <property type="entry name" value="DeoB insert domain-like"/>
    <property type="match status" value="1"/>
</dbReference>
<comment type="function">
    <text evidence="1">Isomerase that catalyzes the conversion of deoxy-ribose 1-phosphate (dRib-1-P) and ribose 1-phosphate (Rib-1-P) to deoxy-ribose 5-phosphate (dRib-5-P) and ribose 5-phosphate (Rib-5-P), respectively.</text>
</comment>
<comment type="catalytic activity">
    <reaction evidence="1">
        <text>2-deoxy-alpha-D-ribose 1-phosphate = 2-deoxy-D-ribose 5-phosphate</text>
        <dbReference type="Rhea" id="RHEA:27658"/>
        <dbReference type="ChEBI" id="CHEBI:57259"/>
        <dbReference type="ChEBI" id="CHEBI:62877"/>
        <dbReference type="EC" id="5.4.2.7"/>
    </reaction>
</comment>
<comment type="catalytic activity">
    <reaction evidence="1">
        <text>alpha-D-ribose 1-phosphate = D-ribose 5-phosphate</text>
        <dbReference type="Rhea" id="RHEA:18793"/>
        <dbReference type="ChEBI" id="CHEBI:57720"/>
        <dbReference type="ChEBI" id="CHEBI:78346"/>
        <dbReference type="EC" id="5.4.2.7"/>
    </reaction>
</comment>
<comment type="cofactor">
    <cofactor evidence="1">
        <name>Mn(2+)</name>
        <dbReference type="ChEBI" id="CHEBI:29035"/>
    </cofactor>
    <text evidence="1">Binds 2 manganese ions.</text>
</comment>
<comment type="pathway">
    <text evidence="1">Carbohydrate degradation; 2-deoxy-D-ribose 1-phosphate degradation; D-glyceraldehyde 3-phosphate and acetaldehyde from 2-deoxy-alpha-D-ribose 1-phosphate: step 1/2.</text>
</comment>
<comment type="subcellular location">
    <subcellularLocation>
        <location evidence="1">Cytoplasm</location>
    </subcellularLocation>
</comment>
<comment type="similarity">
    <text evidence="1">Belongs to the phosphopentomutase family.</text>
</comment>
<evidence type="ECO:0000255" key="1">
    <source>
        <dbReference type="HAMAP-Rule" id="MF_00740"/>
    </source>
</evidence>
<organism>
    <name type="scientific">Thermotoga petrophila (strain ATCC BAA-488 / DSM 13995 / JCM 10881 / RKU-1)</name>
    <dbReference type="NCBI Taxonomy" id="390874"/>
    <lineage>
        <taxon>Bacteria</taxon>
        <taxon>Thermotogati</taxon>
        <taxon>Thermotogota</taxon>
        <taxon>Thermotogae</taxon>
        <taxon>Thermotogales</taxon>
        <taxon>Thermotogaceae</taxon>
        <taxon>Thermotoga</taxon>
    </lineage>
</organism>
<name>DEOB_THEP1</name>
<keyword id="KW-0963">Cytoplasm</keyword>
<keyword id="KW-0413">Isomerase</keyword>
<keyword id="KW-0464">Manganese</keyword>
<keyword id="KW-0479">Metal-binding</keyword>
<gene>
    <name evidence="1" type="primary">deoB</name>
    <name type="ordered locus">Tpet_0758</name>
</gene>
<sequence>MRVVLIVLDSVGIGEMPDAHLYGDEGSNTIVNTAKAVGGLHLPNMAKLGLGNLDDIPGVEPVKPAEGIYGKMMEKSPGKDTTTGHWEIAGVILKKPFDLFPNGFPKELIEEFERRTGRKVIGNKPASGTEIIKELGPIHEKTGALIVYTSADSVFQIAAKKEIVPVEELYRYCKIARELLDEMGYKVARVIARPFTGEWPNYVRTPERKDFSLEPEGKTLLDVLTENGIPVYGVGKIADIFAGRGVTENYKTKDNNDGIDKTISLMKEKNHDCLIFTNLVDFDTKYGHRNDPVSYARALEEFDVRLPEIIQNLKEDDVLFITADHGCDPTTPSTDHSREMVPLLGYGGRLKKDVYVGIRETFADLGQTIADIFGVPPLENGTSFKNLIWE</sequence>
<feature type="chain" id="PRO_1000046412" description="Phosphopentomutase">
    <location>
        <begin position="1"/>
        <end position="390"/>
    </location>
</feature>
<feature type="binding site" evidence="1">
    <location>
        <position position="9"/>
    </location>
    <ligand>
        <name>Mn(2+)</name>
        <dbReference type="ChEBI" id="CHEBI:29035"/>
        <label>1</label>
    </ligand>
</feature>
<feature type="binding site" evidence="1">
    <location>
        <position position="283"/>
    </location>
    <ligand>
        <name>Mn(2+)</name>
        <dbReference type="ChEBI" id="CHEBI:29035"/>
        <label>2</label>
    </ligand>
</feature>
<feature type="binding site" evidence="1">
    <location>
        <position position="288"/>
    </location>
    <ligand>
        <name>Mn(2+)</name>
        <dbReference type="ChEBI" id="CHEBI:29035"/>
        <label>2</label>
    </ligand>
</feature>
<feature type="binding site" evidence="1">
    <location>
        <position position="324"/>
    </location>
    <ligand>
        <name>Mn(2+)</name>
        <dbReference type="ChEBI" id="CHEBI:29035"/>
        <label>1</label>
    </ligand>
</feature>
<feature type="binding site" evidence="1">
    <location>
        <position position="325"/>
    </location>
    <ligand>
        <name>Mn(2+)</name>
        <dbReference type="ChEBI" id="CHEBI:29035"/>
        <label>1</label>
    </ligand>
</feature>
<feature type="binding site" evidence="1">
    <location>
        <position position="336"/>
    </location>
    <ligand>
        <name>Mn(2+)</name>
        <dbReference type="ChEBI" id="CHEBI:29035"/>
        <label>2</label>
    </ligand>
</feature>